<comment type="function">
    <text evidence="1">Catalyzes the decarboxylative condensation of pimeloyl-[acyl-carrier protein] and L-alanine to produce 8-amino-7-oxononanoate (AON), [acyl-carrier protein], and carbon dioxide.</text>
</comment>
<comment type="catalytic activity">
    <reaction evidence="1">
        <text>6-carboxyhexanoyl-[ACP] + L-alanine + H(+) = (8S)-8-amino-7-oxononanoate + holo-[ACP] + CO2</text>
        <dbReference type="Rhea" id="RHEA:42288"/>
        <dbReference type="Rhea" id="RHEA-COMP:9685"/>
        <dbReference type="Rhea" id="RHEA-COMP:9955"/>
        <dbReference type="ChEBI" id="CHEBI:15378"/>
        <dbReference type="ChEBI" id="CHEBI:16526"/>
        <dbReference type="ChEBI" id="CHEBI:57972"/>
        <dbReference type="ChEBI" id="CHEBI:64479"/>
        <dbReference type="ChEBI" id="CHEBI:78846"/>
        <dbReference type="ChEBI" id="CHEBI:149468"/>
        <dbReference type="EC" id="2.3.1.47"/>
    </reaction>
</comment>
<comment type="cofactor">
    <cofactor evidence="1">
        <name>pyridoxal 5'-phosphate</name>
        <dbReference type="ChEBI" id="CHEBI:597326"/>
    </cofactor>
</comment>
<comment type="pathway">
    <text evidence="1">Cofactor biosynthesis; biotin biosynthesis.</text>
</comment>
<comment type="subunit">
    <text evidence="1">Homodimer.</text>
</comment>
<comment type="similarity">
    <text evidence="1">Belongs to the class-II pyridoxal-phosphate-dependent aminotransferase family. BioF subfamily.</text>
</comment>
<evidence type="ECO:0000255" key="1">
    <source>
        <dbReference type="HAMAP-Rule" id="MF_01693"/>
    </source>
</evidence>
<keyword id="KW-0093">Biotin biosynthesis</keyword>
<keyword id="KW-0663">Pyridoxal phosphate</keyword>
<keyword id="KW-1185">Reference proteome</keyword>
<keyword id="KW-0808">Transferase</keyword>
<accession>Q8X823</accession>
<accession>Q7AGD6</accession>
<feature type="chain" id="PRO_0000380971" description="8-amino-7-oxononanoate synthase">
    <location>
        <begin position="1"/>
        <end position="384"/>
    </location>
</feature>
<feature type="binding site" evidence="1">
    <location>
        <position position="21"/>
    </location>
    <ligand>
        <name>substrate</name>
    </ligand>
</feature>
<feature type="binding site" evidence="1">
    <location>
        <begin position="108"/>
        <end position="109"/>
    </location>
    <ligand>
        <name>pyridoxal 5'-phosphate</name>
        <dbReference type="ChEBI" id="CHEBI:597326"/>
    </ligand>
</feature>
<feature type="binding site" evidence="1">
    <location>
        <position position="133"/>
    </location>
    <ligand>
        <name>substrate</name>
    </ligand>
</feature>
<feature type="binding site" evidence="1">
    <location>
        <position position="179"/>
    </location>
    <ligand>
        <name>pyridoxal 5'-phosphate</name>
        <dbReference type="ChEBI" id="CHEBI:597326"/>
    </ligand>
</feature>
<feature type="binding site" evidence="1">
    <location>
        <position position="207"/>
    </location>
    <ligand>
        <name>pyridoxal 5'-phosphate</name>
        <dbReference type="ChEBI" id="CHEBI:597326"/>
    </ligand>
</feature>
<feature type="binding site" evidence="1">
    <location>
        <position position="233"/>
    </location>
    <ligand>
        <name>pyridoxal 5'-phosphate</name>
        <dbReference type="ChEBI" id="CHEBI:597326"/>
    </ligand>
</feature>
<feature type="binding site" evidence="1">
    <location>
        <position position="352"/>
    </location>
    <ligand>
        <name>substrate</name>
    </ligand>
</feature>
<feature type="modified residue" description="N6-(pyridoxal phosphate)lysine" evidence="1">
    <location>
        <position position="236"/>
    </location>
</feature>
<proteinExistence type="inferred from homology"/>
<name>BIOF_ECO57</name>
<dbReference type="EC" id="2.3.1.47" evidence="1"/>
<dbReference type="EMBL" id="AE005174">
    <property type="protein sequence ID" value="AAG55147.1"/>
    <property type="molecule type" value="Genomic_DNA"/>
</dbReference>
<dbReference type="EMBL" id="BA000007">
    <property type="protein sequence ID" value="BAB34277.1"/>
    <property type="molecule type" value="Genomic_DNA"/>
</dbReference>
<dbReference type="PIR" id="F90735">
    <property type="entry name" value="F90735"/>
</dbReference>
<dbReference type="PIR" id="G85585">
    <property type="entry name" value="G85585"/>
</dbReference>
<dbReference type="RefSeq" id="NP_308881.1">
    <property type="nucleotide sequence ID" value="NC_002695.1"/>
</dbReference>
<dbReference type="RefSeq" id="WP_000118816.1">
    <property type="nucleotide sequence ID" value="NZ_VOAI01000006.1"/>
</dbReference>
<dbReference type="SMR" id="Q8X823"/>
<dbReference type="STRING" id="155864.Z0995"/>
<dbReference type="GeneID" id="917598"/>
<dbReference type="KEGG" id="ece:Z0995"/>
<dbReference type="KEGG" id="ecs:ECs_0854"/>
<dbReference type="PATRIC" id="fig|386585.9.peg.968"/>
<dbReference type="eggNOG" id="COG0156">
    <property type="taxonomic scope" value="Bacteria"/>
</dbReference>
<dbReference type="HOGENOM" id="CLU_015846_11_2_6"/>
<dbReference type="OMA" id="FSMDGDQ"/>
<dbReference type="UniPathway" id="UPA00078"/>
<dbReference type="Proteomes" id="UP000000558">
    <property type="component" value="Chromosome"/>
</dbReference>
<dbReference type="Proteomes" id="UP000002519">
    <property type="component" value="Chromosome"/>
</dbReference>
<dbReference type="GO" id="GO:0008710">
    <property type="term" value="F:8-amino-7-oxononanoate synthase activity"/>
    <property type="evidence" value="ECO:0007669"/>
    <property type="project" value="UniProtKB-UniRule"/>
</dbReference>
<dbReference type="GO" id="GO:0030170">
    <property type="term" value="F:pyridoxal phosphate binding"/>
    <property type="evidence" value="ECO:0007669"/>
    <property type="project" value="UniProtKB-UniRule"/>
</dbReference>
<dbReference type="GO" id="GO:0009102">
    <property type="term" value="P:biotin biosynthetic process"/>
    <property type="evidence" value="ECO:0007669"/>
    <property type="project" value="UniProtKB-UniRule"/>
</dbReference>
<dbReference type="CDD" id="cd06454">
    <property type="entry name" value="KBL_like"/>
    <property type="match status" value="1"/>
</dbReference>
<dbReference type="FunFam" id="3.40.640.10:FF:000095">
    <property type="entry name" value="8-amino-7-oxononanoate synthase"/>
    <property type="match status" value="1"/>
</dbReference>
<dbReference type="FunFam" id="3.90.1150.10:FF:000036">
    <property type="entry name" value="8-amino-7-oxononanoate synthase"/>
    <property type="match status" value="1"/>
</dbReference>
<dbReference type="Gene3D" id="3.90.1150.10">
    <property type="entry name" value="Aspartate Aminotransferase, domain 1"/>
    <property type="match status" value="1"/>
</dbReference>
<dbReference type="Gene3D" id="3.40.640.10">
    <property type="entry name" value="Type I PLP-dependent aspartate aminotransferase-like (Major domain)"/>
    <property type="match status" value="1"/>
</dbReference>
<dbReference type="HAMAP" id="MF_01693">
    <property type="entry name" value="BioF_aminotrans_2"/>
    <property type="match status" value="1"/>
</dbReference>
<dbReference type="InterPro" id="IPR001917">
    <property type="entry name" value="Aminotrans_II_pyridoxalP_BS"/>
</dbReference>
<dbReference type="InterPro" id="IPR004839">
    <property type="entry name" value="Aminotransferase_I/II_large"/>
</dbReference>
<dbReference type="InterPro" id="IPR050087">
    <property type="entry name" value="AON_synthase_class-II"/>
</dbReference>
<dbReference type="InterPro" id="IPR004723">
    <property type="entry name" value="AONS_Archaea/Proteobacteria"/>
</dbReference>
<dbReference type="InterPro" id="IPR022834">
    <property type="entry name" value="AONS_Proteobacteria"/>
</dbReference>
<dbReference type="InterPro" id="IPR015424">
    <property type="entry name" value="PyrdxlP-dep_Trfase"/>
</dbReference>
<dbReference type="InterPro" id="IPR015421">
    <property type="entry name" value="PyrdxlP-dep_Trfase_major"/>
</dbReference>
<dbReference type="InterPro" id="IPR015422">
    <property type="entry name" value="PyrdxlP-dep_Trfase_small"/>
</dbReference>
<dbReference type="NCBIfam" id="TIGR00858">
    <property type="entry name" value="bioF"/>
    <property type="match status" value="1"/>
</dbReference>
<dbReference type="PANTHER" id="PTHR13693:SF100">
    <property type="entry name" value="8-AMINO-7-OXONONANOATE SYNTHASE"/>
    <property type="match status" value="1"/>
</dbReference>
<dbReference type="PANTHER" id="PTHR13693">
    <property type="entry name" value="CLASS II AMINOTRANSFERASE/8-AMINO-7-OXONONANOATE SYNTHASE"/>
    <property type="match status" value="1"/>
</dbReference>
<dbReference type="Pfam" id="PF00155">
    <property type="entry name" value="Aminotran_1_2"/>
    <property type="match status" value="1"/>
</dbReference>
<dbReference type="SUPFAM" id="SSF53383">
    <property type="entry name" value="PLP-dependent transferases"/>
    <property type="match status" value="1"/>
</dbReference>
<dbReference type="PROSITE" id="PS00599">
    <property type="entry name" value="AA_TRANSFER_CLASS_2"/>
    <property type="match status" value="1"/>
</dbReference>
<protein>
    <recommendedName>
        <fullName evidence="1">8-amino-7-oxononanoate synthase</fullName>
        <shortName evidence="1">AONS</shortName>
        <ecNumber evidence="1">2.3.1.47</ecNumber>
    </recommendedName>
    <alternativeName>
        <fullName evidence="1">7-keto-8-amino-pelargonic acid synthase</fullName>
        <shortName evidence="1">7-KAP synthase</shortName>
        <shortName evidence="1">KAPA synthase</shortName>
    </alternativeName>
    <alternativeName>
        <fullName evidence="1">8-amino-7-ketopelargonate synthase</fullName>
    </alternativeName>
</protein>
<gene>
    <name evidence="1" type="primary">bioF</name>
    <name type="ordered locus">Z0995</name>
    <name type="ordered locus">ECs0854</name>
</gene>
<reference key="1">
    <citation type="journal article" date="2001" name="Nature">
        <title>Genome sequence of enterohaemorrhagic Escherichia coli O157:H7.</title>
        <authorList>
            <person name="Perna N.T."/>
            <person name="Plunkett G. III"/>
            <person name="Burland V."/>
            <person name="Mau B."/>
            <person name="Glasner J.D."/>
            <person name="Rose D.J."/>
            <person name="Mayhew G.F."/>
            <person name="Evans P.S."/>
            <person name="Gregor J."/>
            <person name="Kirkpatrick H.A."/>
            <person name="Posfai G."/>
            <person name="Hackett J."/>
            <person name="Klink S."/>
            <person name="Boutin A."/>
            <person name="Shao Y."/>
            <person name="Miller L."/>
            <person name="Grotbeck E.J."/>
            <person name="Davis N.W."/>
            <person name="Lim A."/>
            <person name="Dimalanta E.T."/>
            <person name="Potamousis K."/>
            <person name="Apodaca J."/>
            <person name="Anantharaman T.S."/>
            <person name="Lin J."/>
            <person name="Yen G."/>
            <person name="Schwartz D.C."/>
            <person name="Welch R.A."/>
            <person name="Blattner F.R."/>
        </authorList>
    </citation>
    <scope>NUCLEOTIDE SEQUENCE [LARGE SCALE GENOMIC DNA]</scope>
    <source>
        <strain>O157:H7 / EDL933 / ATCC 700927 / EHEC</strain>
    </source>
</reference>
<reference key="2">
    <citation type="journal article" date="2001" name="DNA Res.">
        <title>Complete genome sequence of enterohemorrhagic Escherichia coli O157:H7 and genomic comparison with a laboratory strain K-12.</title>
        <authorList>
            <person name="Hayashi T."/>
            <person name="Makino K."/>
            <person name="Ohnishi M."/>
            <person name="Kurokawa K."/>
            <person name="Ishii K."/>
            <person name="Yokoyama K."/>
            <person name="Han C.-G."/>
            <person name="Ohtsubo E."/>
            <person name="Nakayama K."/>
            <person name="Murata T."/>
            <person name="Tanaka M."/>
            <person name="Tobe T."/>
            <person name="Iida T."/>
            <person name="Takami H."/>
            <person name="Honda T."/>
            <person name="Sasakawa C."/>
            <person name="Ogasawara N."/>
            <person name="Yasunaga T."/>
            <person name="Kuhara S."/>
            <person name="Shiba T."/>
            <person name="Hattori M."/>
            <person name="Shinagawa H."/>
        </authorList>
    </citation>
    <scope>NUCLEOTIDE SEQUENCE [LARGE SCALE GENOMIC DNA]</scope>
    <source>
        <strain>O157:H7 / Sakai / RIMD 0509952 / EHEC</strain>
    </source>
</reference>
<sequence>MSWQEKINAALDARRAADALRRRYPVAQGAGRWLVADDRQYLNFSSNDYLGLSHHPQIIRAWKQGAEQFGVGSGGSGHVSGYSVAHQALEEELAEWLGYSRALLFISGFAANQAVIAAMMAKEDRIVADRLSHASLLEAASLSPSQLRRFVHNDVTHLARLLASPCPGQQLVVTEGVFSMDGDSAPLAEIQQVTQQHNGWLMVDDAHGTGVIGEQGRGTCWLQKVKPELLVVTFGKGFGVSGAAVLCSSTVADYLLQFARHLIYSTSMPPAQAQALRASLAVIRSDEGDARREKLAALITRFRAGVQDLPFTLADSCSAIQPLIVGDNSRALQLAEKLRQQGCWVTAIRPPTVPSGTARLRLTLTAAHEMQDIDRLLEVLHGNG</sequence>
<organism>
    <name type="scientific">Escherichia coli O157:H7</name>
    <dbReference type="NCBI Taxonomy" id="83334"/>
    <lineage>
        <taxon>Bacteria</taxon>
        <taxon>Pseudomonadati</taxon>
        <taxon>Pseudomonadota</taxon>
        <taxon>Gammaproteobacteria</taxon>
        <taxon>Enterobacterales</taxon>
        <taxon>Enterobacteriaceae</taxon>
        <taxon>Escherichia</taxon>
    </lineage>
</organism>